<feature type="signal peptide" evidence="2">
    <location>
        <begin position="1"/>
        <end position="22"/>
    </location>
</feature>
<feature type="peptide" id="PRO_0000016116" description="Relaxin B chain">
    <location>
        <begin position="23"/>
        <end position="57"/>
    </location>
</feature>
<feature type="propeptide" id="PRO_0000016117" description="Connecting peptide">
    <location>
        <begin position="58"/>
        <end position="158"/>
    </location>
</feature>
<feature type="peptide" id="PRO_0000016118" description="Relaxin A chain">
    <location>
        <begin position="163"/>
        <end position="186"/>
    </location>
</feature>
<feature type="modified residue" description="Pyrrolidone carboxylic acid" evidence="2">
    <location>
        <position position="163"/>
    </location>
</feature>
<feature type="disulfide bond" description="Interchain (between B and A chains)" evidence="1">
    <location>
        <begin position="36"/>
        <end position="173"/>
    </location>
</feature>
<feature type="disulfide bond" description="Interchain (between B and A chains)" evidence="1">
    <location>
        <begin position="48"/>
        <end position="186"/>
    </location>
</feature>
<feature type="disulfide bond" evidence="1">
    <location>
        <begin position="172"/>
        <end position="177"/>
    </location>
</feature>
<reference key="1">
    <citation type="journal article" date="1981" name="Nature">
        <title>Molecular cloning and characterization of cDNA sequences coding for rat relaxin.</title>
        <authorList>
            <person name="Hudson P."/>
            <person name="Haley J."/>
            <person name="Cronk M."/>
            <person name="Shine J."/>
            <person name="Niall H."/>
        </authorList>
    </citation>
    <scope>NUCLEOTIDE SEQUENCE [MRNA]</scope>
</reference>
<reference key="2">
    <citation type="journal article" date="2003" name="Gene">
        <title>Cloning, characterization, and expression of the rat relaxin gene.</title>
        <authorList>
            <person name="Soloff M.S."/>
            <person name="Gal S."/>
            <person name="Hoare S."/>
            <person name="Peters C.A."/>
            <person name="Hunzicker-Dunn M."/>
            <person name="Anderson G.D."/>
            <person name="Wood T.G."/>
        </authorList>
    </citation>
    <scope>NUCLEOTIDE SEQUENCE [GENOMIC DNA]</scope>
</reference>
<reference key="3">
    <citation type="journal article" date="1981" name="Endocrinology">
        <title>Limited sequence homology between porcine and rat relaxins: implications for physiological studies.</title>
        <authorList>
            <person name="John M.J."/>
            <person name="Borjesson B.W."/>
            <person name="Walsh J.R."/>
            <person name="Niall H.D."/>
        </authorList>
    </citation>
    <scope>PROTEIN SEQUENCE OF 23-57 AND 163-186</scope>
    <scope>PYROGLUTAMATE FORMATION AT GLN-163</scope>
</reference>
<organism>
    <name type="scientific">Rattus norvegicus</name>
    <name type="common">Rat</name>
    <dbReference type="NCBI Taxonomy" id="10116"/>
    <lineage>
        <taxon>Eukaryota</taxon>
        <taxon>Metazoa</taxon>
        <taxon>Chordata</taxon>
        <taxon>Craniata</taxon>
        <taxon>Vertebrata</taxon>
        <taxon>Euteleostomi</taxon>
        <taxon>Mammalia</taxon>
        <taxon>Eutheria</taxon>
        <taxon>Euarchontoglires</taxon>
        <taxon>Glires</taxon>
        <taxon>Rodentia</taxon>
        <taxon>Myomorpha</taxon>
        <taxon>Muroidea</taxon>
        <taxon>Muridae</taxon>
        <taxon>Murinae</taxon>
        <taxon>Rattus</taxon>
    </lineage>
</organism>
<dbReference type="EMBL" id="J00780">
    <property type="protein sequence ID" value="AAA42029.1"/>
    <property type="molecule type" value="mRNA"/>
</dbReference>
<dbReference type="EMBL" id="V01264">
    <property type="protein sequence ID" value="CAA24578.1"/>
    <property type="molecule type" value="mRNA"/>
</dbReference>
<dbReference type="EMBL" id="AY240029">
    <property type="protein sequence ID" value="AAP41739.1"/>
    <property type="molecule type" value="Genomic_DNA"/>
</dbReference>
<dbReference type="PIR" id="A01614">
    <property type="entry name" value="RXRT"/>
</dbReference>
<dbReference type="RefSeq" id="NP_038199.1">
    <property type="nucleotide sequence ID" value="NM_013413.2"/>
</dbReference>
<dbReference type="FunCoup" id="P01347">
    <property type="interactions" value="65"/>
</dbReference>
<dbReference type="STRING" id="10116.ENSRNOP00000072430"/>
<dbReference type="PhosphoSitePlus" id="P01347"/>
<dbReference type="PaxDb" id="10116-ENSRNOP00000021315"/>
<dbReference type="GeneID" id="25616"/>
<dbReference type="KEGG" id="rno:25616"/>
<dbReference type="UCSC" id="RGD:3579">
    <property type="organism name" value="rat"/>
</dbReference>
<dbReference type="AGR" id="RGD:3579"/>
<dbReference type="CTD" id="6013"/>
<dbReference type="RGD" id="3579">
    <property type="gene designation" value="Rln1"/>
</dbReference>
<dbReference type="VEuPathDB" id="HostDB:ENSRNOG00000060867"/>
<dbReference type="eggNOG" id="ENOG502TH8D">
    <property type="taxonomic scope" value="Eukaryota"/>
</dbReference>
<dbReference type="HOGENOM" id="CLU_115657_0_0_1"/>
<dbReference type="InParanoid" id="P01347"/>
<dbReference type="OrthoDB" id="58973at9989"/>
<dbReference type="PhylomeDB" id="P01347"/>
<dbReference type="TreeFam" id="TF333404"/>
<dbReference type="Reactome" id="R-RNO-444821">
    <property type="pathway name" value="Relaxin receptors"/>
</dbReference>
<dbReference type="PRO" id="PR:P01347"/>
<dbReference type="Proteomes" id="UP000002494">
    <property type="component" value="Chromosome 1"/>
</dbReference>
<dbReference type="Bgee" id="ENSRNOG00000060867">
    <property type="expression patterns" value="Expressed in frontal cortex and 3 other cell types or tissues"/>
</dbReference>
<dbReference type="GO" id="GO:0005576">
    <property type="term" value="C:extracellular region"/>
    <property type="evidence" value="ECO:0007669"/>
    <property type="project" value="UniProtKB-SubCell"/>
</dbReference>
<dbReference type="GO" id="GO:0005179">
    <property type="term" value="F:hormone activity"/>
    <property type="evidence" value="ECO:0000304"/>
    <property type="project" value="RGD"/>
</dbReference>
<dbReference type="GO" id="GO:0005102">
    <property type="term" value="F:signaling receptor binding"/>
    <property type="evidence" value="ECO:0000266"/>
    <property type="project" value="RGD"/>
</dbReference>
<dbReference type="GO" id="GO:0007188">
    <property type="term" value="P:adenylate cyclase-modulating G protein-coupled receptor signaling pathway"/>
    <property type="evidence" value="ECO:0000316"/>
    <property type="project" value="MGI"/>
</dbReference>
<dbReference type="GO" id="GO:0048589">
    <property type="term" value="P:developmental growth"/>
    <property type="evidence" value="ECO:0000266"/>
    <property type="project" value="RGD"/>
</dbReference>
<dbReference type="GO" id="GO:0060443">
    <property type="term" value="P:mammary gland morphogenesis"/>
    <property type="evidence" value="ECO:0000266"/>
    <property type="project" value="RGD"/>
</dbReference>
<dbReference type="GO" id="GO:0043066">
    <property type="term" value="P:negative regulation of apoptotic process"/>
    <property type="evidence" value="ECO:0000315"/>
    <property type="project" value="CACAO"/>
</dbReference>
<dbReference type="GO" id="GO:0060618">
    <property type="term" value="P:nipple development"/>
    <property type="evidence" value="ECO:0000266"/>
    <property type="project" value="RGD"/>
</dbReference>
<dbReference type="GO" id="GO:0060736">
    <property type="term" value="P:prostate gland growth"/>
    <property type="evidence" value="ECO:0000266"/>
    <property type="project" value="RGD"/>
</dbReference>
<dbReference type="GO" id="GO:0042981">
    <property type="term" value="P:regulation of apoptotic process"/>
    <property type="evidence" value="ECO:0000266"/>
    <property type="project" value="RGD"/>
</dbReference>
<dbReference type="GO" id="GO:0050878">
    <property type="term" value="P:regulation of body fluid levels"/>
    <property type="evidence" value="ECO:0000304"/>
    <property type="project" value="RGD"/>
</dbReference>
<dbReference type="GO" id="GO:0042127">
    <property type="term" value="P:regulation of cell population proliferation"/>
    <property type="evidence" value="ECO:0000315"/>
    <property type="project" value="CACAO"/>
</dbReference>
<dbReference type="GO" id="GO:0010749">
    <property type="term" value="P:regulation of nitric oxide mediated signal transduction"/>
    <property type="evidence" value="ECO:0000314"/>
    <property type="project" value="MGI"/>
</dbReference>
<dbReference type="GO" id="GO:0007283">
    <property type="term" value="P:spermatogenesis"/>
    <property type="evidence" value="ECO:0000266"/>
    <property type="project" value="RGD"/>
</dbReference>
<dbReference type="CDD" id="cd04365">
    <property type="entry name" value="IlGF_relaxin_like"/>
    <property type="match status" value="1"/>
</dbReference>
<dbReference type="InterPro" id="IPR016179">
    <property type="entry name" value="Insulin-like"/>
</dbReference>
<dbReference type="InterPro" id="IPR036438">
    <property type="entry name" value="Insulin-like_sf"/>
</dbReference>
<dbReference type="InterPro" id="IPR022353">
    <property type="entry name" value="Insulin_CS"/>
</dbReference>
<dbReference type="InterPro" id="IPR022421">
    <property type="entry name" value="Relaxin"/>
</dbReference>
<dbReference type="InterPro" id="IPR051042">
    <property type="entry name" value="Repro_Hormone_Insulin-like"/>
</dbReference>
<dbReference type="PANTHER" id="PTHR12004:SF13">
    <property type="entry name" value="PRORELAXIN H2"/>
    <property type="match status" value="1"/>
</dbReference>
<dbReference type="PANTHER" id="PTHR12004">
    <property type="entry name" value="RELAXIN"/>
    <property type="match status" value="1"/>
</dbReference>
<dbReference type="Pfam" id="PF00049">
    <property type="entry name" value="Insulin"/>
    <property type="match status" value="1"/>
</dbReference>
<dbReference type="PRINTS" id="PR02004">
    <property type="entry name" value="RELAXIN"/>
</dbReference>
<dbReference type="SMART" id="SM00078">
    <property type="entry name" value="IlGF"/>
    <property type="match status" value="1"/>
</dbReference>
<dbReference type="SUPFAM" id="SSF56994">
    <property type="entry name" value="Insulin-like"/>
    <property type="match status" value="1"/>
</dbReference>
<dbReference type="PROSITE" id="PS00262">
    <property type="entry name" value="INSULIN"/>
    <property type="match status" value="1"/>
</dbReference>
<protein>
    <recommendedName>
        <fullName>Prorelaxin 1</fullName>
    </recommendedName>
    <component>
        <recommendedName>
            <fullName>Relaxin B chain</fullName>
        </recommendedName>
    </component>
    <component>
        <recommendedName>
            <fullName>Relaxin A chain</fullName>
        </recommendedName>
    </component>
</protein>
<comment type="function">
    <text>Relaxin is an ovarian hormone that acts with estrogen to produce dilatation of the birth canal in many mammals.</text>
</comment>
<comment type="subunit">
    <text>Heterodimer of a B chain and an A chain linked by two disulfide bonds.</text>
</comment>
<comment type="subcellular location">
    <subcellularLocation>
        <location>Secreted</location>
    </subcellularLocation>
</comment>
<comment type="similarity">
    <text evidence="3">Belongs to the insulin family.</text>
</comment>
<keyword id="KW-0165">Cleavage on pair of basic residues</keyword>
<keyword id="KW-0903">Direct protein sequencing</keyword>
<keyword id="KW-1015">Disulfide bond</keyword>
<keyword id="KW-0372">Hormone</keyword>
<keyword id="KW-0873">Pyrrolidone carboxylic acid</keyword>
<keyword id="KW-1185">Reference proteome</keyword>
<keyword id="KW-0964">Secreted</keyword>
<keyword id="KW-0732">Signal</keyword>
<gene>
    <name type="primary">Rln1</name>
    <name type="synonym">Rln</name>
</gene>
<evidence type="ECO:0000250" key="1"/>
<evidence type="ECO:0000269" key="2">
    <source>
    </source>
</evidence>
<evidence type="ECO:0000305" key="3"/>
<accession>P01347</accession>
<accession>Q78N50</accession>
<sequence>MSSRLLLQLLGFWLFLSQPCRARVSEEWMDQVIQVCGRGYARAWIEVCGASVGRLALSQEEPAPLARQATAEVVPSFINKDAEPFDMTLKCLPNLSEERKAALSEGRAPFPELQQHAPALSDSVVSLEGFKKTFHNQLGEAEDGGPPELKYLGSDAQSRKKRQSGALLSEQCCHIGCTRRSIAKLC</sequence>
<name>REL1_RAT</name>
<proteinExistence type="evidence at protein level"/>